<comment type="function">
    <text>Tubulin is the major constituent of microtubules, a cylinder consisting of laterally associated linear protofilaments composed of alpha- and beta-tubulin heterodimers. Microtubules grow by the addition of GTP-tubulin dimers to the microtubule end, where a stabilizing cap forms. Below the cap, tubulin dimers are in GDP-bound state, owing to GTPase activity of alpha-tubulin.</text>
</comment>
<comment type="catalytic activity">
    <reaction evidence="2">
        <text>GTP + H2O = GDP + phosphate + H(+)</text>
        <dbReference type="Rhea" id="RHEA:19669"/>
        <dbReference type="ChEBI" id="CHEBI:15377"/>
        <dbReference type="ChEBI" id="CHEBI:15378"/>
        <dbReference type="ChEBI" id="CHEBI:37565"/>
        <dbReference type="ChEBI" id="CHEBI:43474"/>
        <dbReference type="ChEBI" id="CHEBI:58189"/>
    </reaction>
    <physiologicalReaction direction="left-to-right" evidence="2">
        <dbReference type="Rhea" id="RHEA:19670"/>
    </physiologicalReaction>
</comment>
<comment type="cofactor">
    <cofactor evidence="2">
        <name>Mg(2+)</name>
        <dbReference type="ChEBI" id="CHEBI:18420"/>
    </cofactor>
</comment>
<comment type="subunit">
    <text>Dimer of alpha and beta chains. A typical microtubule is a hollow water-filled tube with an outer diameter of 25 nm and an inner diameter of 15 nM. Alpha-beta heterodimers associate head-to-tail to form protofilaments running lengthwise along the microtubule wall with the beta-tubulin subunit facing the microtubule plus end conferring a structural polarity. Microtubules usually have 13 protofilaments but different protofilament numbers can be found in some organisms and specialized cells.</text>
</comment>
<comment type="subcellular location">
    <subcellularLocation>
        <location>Cytoplasm</location>
        <location>Cytoskeleton</location>
    </subcellularLocation>
</comment>
<comment type="similarity">
    <text evidence="3">Belongs to the tubulin family.</text>
</comment>
<accession>P24633</accession>
<accession>C8VU27</accession>
<accession>Q5BGL4</accession>
<gene>
    <name type="primary">tubA</name>
    <name type="ORF">AN0316</name>
</gene>
<proteinExistence type="inferred from homology"/>
<organism>
    <name type="scientific">Emericella nidulans (strain FGSC A4 / ATCC 38163 / CBS 112.46 / NRRL 194 / M139)</name>
    <name type="common">Aspergillus nidulans</name>
    <dbReference type="NCBI Taxonomy" id="227321"/>
    <lineage>
        <taxon>Eukaryota</taxon>
        <taxon>Fungi</taxon>
        <taxon>Dikarya</taxon>
        <taxon>Ascomycota</taxon>
        <taxon>Pezizomycotina</taxon>
        <taxon>Eurotiomycetes</taxon>
        <taxon>Eurotiomycetidae</taxon>
        <taxon>Eurotiales</taxon>
        <taxon>Aspergillaceae</taxon>
        <taxon>Aspergillus</taxon>
        <taxon>Aspergillus subgen. Nidulantes</taxon>
    </lineage>
</organism>
<reference key="1">
    <citation type="journal article" date="1991" name="Mol. Gen. Genet.">
        <title>Two alpha-tubulin genes of Aspergillus nidulans encode divergent proteins.</title>
        <authorList>
            <person name="Doshi P."/>
            <person name="Bossie C.A."/>
            <person name="Doonan J.H."/>
            <person name="May G.S."/>
            <person name="Morris N.R."/>
        </authorList>
    </citation>
    <scope>NUCLEOTIDE SEQUENCE [GENOMIC DNA]</scope>
</reference>
<reference key="2">
    <citation type="journal article" date="2005" name="Nature">
        <title>Sequencing of Aspergillus nidulans and comparative analysis with A. fumigatus and A. oryzae.</title>
        <authorList>
            <person name="Galagan J.E."/>
            <person name="Calvo S.E."/>
            <person name="Cuomo C."/>
            <person name="Ma L.-J."/>
            <person name="Wortman J.R."/>
            <person name="Batzoglou S."/>
            <person name="Lee S.-I."/>
            <person name="Bastuerkmen M."/>
            <person name="Spevak C.C."/>
            <person name="Clutterbuck J."/>
            <person name="Kapitonov V."/>
            <person name="Jurka J."/>
            <person name="Scazzocchio C."/>
            <person name="Farman M.L."/>
            <person name="Butler J."/>
            <person name="Purcell S."/>
            <person name="Harris S."/>
            <person name="Braus G.H."/>
            <person name="Draht O."/>
            <person name="Busch S."/>
            <person name="D'Enfert C."/>
            <person name="Bouchier C."/>
            <person name="Goldman G.H."/>
            <person name="Bell-Pedersen D."/>
            <person name="Griffiths-Jones S."/>
            <person name="Doonan J.H."/>
            <person name="Yu J."/>
            <person name="Vienken K."/>
            <person name="Pain A."/>
            <person name="Freitag M."/>
            <person name="Selker E.U."/>
            <person name="Archer D.B."/>
            <person name="Penalva M.A."/>
            <person name="Oakley B.R."/>
            <person name="Momany M."/>
            <person name="Tanaka T."/>
            <person name="Kumagai T."/>
            <person name="Asai K."/>
            <person name="Machida M."/>
            <person name="Nierman W.C."/>
            <person name="Denning D.W."/>
            <person name="Caddick M.X."/>
            <person name="Hynes M."/>
            <person name="Paoletti M."/>
            <person name="Fischer R."/>
            <person name="Miller B.L."/>
            <person name="Dyer P.S."/>
            <person name="Sachs M.S."/>
            <person name="Osmani S.A."/>
            <person name="Birren B.W."/>
        </authorList>
    </citation>
    <scope>NUCLEOTIDE SEQUENCE [LARGE SCALE GENOMIC DNA]</scope>
    <source>
        <strain>FGSC A4 / ATCC 38163 / CBS 112.46 / NRRL 194 / M139</strain>
    </source>
</reference>
<reference key="3">
    <citation type="journal article" date="2009" name="Fungal Genet. Biol.">
        <title>The 2008 update of the Aspergillus nidulans genome annotation: a community effort.</title>
        <authorList>
            <person name="Wortman J.R."/>
            <person name="Gilsenan J.M."/>
            <person name="Joardar V."/>
            <person name="Deegan J."/>
            <person name="Clutterbuck J."/>
            <person name="Andersen M.R."/>
            <person name="Archer D."/>
            <person name="Bencina M."/>
            <person name="Braus G."/>
            <person name="Coutinho P."/>
            <person name="von Dohren H."/>
            <person name="Doonan J."/>
            <person name="Driessen A.J."/>
            <person name="Durek P."/>
            <person name="Espeso E."/>
            <person name="Fekete E."/>
            <person name="Flipphi M."/>
            <person name="Estrada C.G."/>
            <person name="Geysens S."/>
            <person name="Goldman G."/>
            <person name="de Groot P.W."/>
            <person name="Hansen K."/>
            <person name="Harris S.D."/>
            <person name="Heinekamp T."/>
            <person name="Helmstaedt K."/>
            <person name="Henrissat B."/>
            <person name="Hofmann G."/>
            <person name="Homan T."/>
            <person name="Horio T."/>
            <person name="Horiuchi H."/>
            <person name="James S."/>
            <person name="Jones M."/>
            <person name="Karaffa L."/>
            <person name="Karanyi Z."/>
            <person name="Kato M."/>
            <person name="Keller N."/>
            <person name="Kelly D.E."/>
            <person name="Kiel J.A."/>
            <person name="Kim J.M."/>
            <person name="van der Klei I.J."/>
            <person name="Klis F.M."/>
            <person name="Kovalchuk A."/>
            <person name="Krasevec N."/>
            <person name="Kubicek C.P."/>
            <person name="Liu B."/>
            <person name="Maccabe A."/>
            <person name="Meyer V."/>
            <person name="Mirabito P."/>
            <person name="Miskei M."/>
            <person name="Mos M."/>
            <person name="Mullins J."/>
            <person name="Nelson D.R."/>
            <person name="Nielsen J."/>
            <person name="Oakley B.R."/>
            <person name="Osmani S.A."/>
            <person name="Pakula T."/>
            <person name="Paszewski A."/>
            <person name="Paulsen I."/>
            <person name="Pilsyk S."/>
            <person name="Pocsi I."/>
            <person name="Punt P.J."/>
            <person name="Ram A.F."/>
            <person name="Ren Q."/>
            <person name="Robellet X."/>
            <person name="Robson G."/>
            <person name="Seiboth B."/>
            <person name="van Solingen P."/>
            <person name="Specht T."/>
            <person name="Sun J."/>
            <person name="Taheri-Talesh N."/>
            <person name="Takeshita N."/>
            <person name="Ussery D."/>
            <person name="vanKuyk P.A."/>
            <person name="Visser H."/>
            <person name="van de Vondervoort P.J."/>
            <person name="de Vries R.P."/>
            <person name="Walton J."/>
            <person name="Xiang X."/>
            <person name="Xiong Y."/>
            <person name="Zeng A.P."/>
            <person name="Brandt B.W."/>
            <person name="Cornell M.J."/>
            <person name="van den Hondel C.A."/>
            <person name="Visser J."/>
            <person name="Oliver S.G."/>
            <person name="Turner G."/>
        </authorList>
    </citation>
    <scope>GENOME REANNOTATION</scope>
    <source>
        <strain>FGSC A4 / ATCC 38163 / CBS 112.46 / NRRL 194 / M139</strain>
    </source>
</reference>
<protein>
    <recommendedName>
        <fullName>Tubulin alpha-1 chain</fullName>
        <ecNumber evidence="2">3.6.5.-</ecNumber>
    </recommendedName>
</protein>
<feature type="chain" id="PRO_0000048165" description="Tubulin alpha-1 chain">
    <location>
        <begin position="1"/>
        <end position="449"/>
    </location>
</feature>
<feature type="active site" evidence="2">
    <location>
        <position position="254"/>
    </location>
</feature>
<feature type="binding site" evidence="2">
    <location>
        <position position="11"/>
    </location>
    <ligand>
        <name>GTP</name>
        <dbReference type="ChEBI" id="CHEBI:37565"/>
    </ligand>
</feature>
<feature type="binding site" evidence="2">
    <location>
        <position position="71"/>
    </location>
    <ligand>
        <name>GTP</name>
        <dbReference type="ChEBI" id="CHEBI:37565"/>
    </ligand>
</feature>
<feature type="binding site" evidence="2">
    <location>
        <position position="71"/>
    </location>
    <ligand>
        <name>Mg(2+)</name>
        <dbReference type="ChEBI" id="CHEBI:18420"/>
    </ligand>
</feature>
<feature type="binding site" evidence="2">
    <location>
        <position position="140"/>
    </location>
    <ligand>
        <name>GTP</name>
        <dbReference type="ChEBI" id="CHEBI:37565"/>
    </ligand>
</feature>
<feature type="binding site" evidence="2">
    <location>
        <position position="144"/>
    </location>
    <ligand>
        <name>GTP</name>
        <dbReference type="ChEBI" id="CHEBI:37565"/>
    </ligand>
</feature>
<feature type="binding site" evidence="2">
    <location>
        <position position="145"/>
    </location>
    <ligand>
        <name>GTP</name>
        <dbReference type="ChEBI" id="CHEBI:37565"/>
    </ligand>
</feature>
<feature type="binding site" evidence="2">
    <location>
        <position position="179"/>
    </location>
    <ligand>
        <name>GTP</name>
        <dbReference type="ChEBI" id="CHEBI:37565"/>
    </ligand>
</feature>
<feature type="binding site" evidence="2">
    <location>
        <position position="206"/>
    </location>
    <ligand>
        <name>GTP</name>
        <dbReference type="ChEBI" id="CHEBI:37565"/>
    </ligand>
</feature>
<feature type="binding site" evidence="2">
    <location>
        <position position="228"/>
    </location>
    <ligand>
        <name>GTP</name>
        <dbReference type="ChEBI" id="CHEBI:37565"/>
    </ligand>
</feature>
<feature type="site" description="Involved in polymerization" evidence="1">
    <location>
        <position position="449"/>
    </location>
</feature>
<feature type="sequence conflict" description="In Ref. 1." evidence="3" ref="1">
    <original>KET</original>
    <variation>RVD</variation>
    <location>
        <begin position="326"/>
        <end position="328"/>
    </location>
</feature>
<dbReference type="EC" id="3.6.5.-" evidence="2"/>
<dbReference type="EMBL" id="AACD01000006">
    <property type="protein sequence ID" value="EAA65722.1"/>
    <property type="molecule type" value="Genomic_DNA"/>
</dbReference>
<dbReference type="EMBL" id="BN001308">
    <property type="protein sequence ID" value="CBF89739.1"/>
    <property type="molecule type" value="Genomic_DNA"/>
</dbReference>
<dbReference type="PIR" id="S13336">
    <property type="entry name" value="S13336"/>
</dbReference>
<dbReference type="RefSeq" id="XP_657920.1">
    <property type="nucleotide sequence ID" value="XM_652828.1"/>
</dbReference>
<dbReference type="SMR" id="P24633"/>
<dbReference type="FunCoup" id="P24633">
    <property type="interactions" value="1144"/>
</dbReference>
<dbReference type="STRING" id="227321.P24633"/>
<dbReference type="EnsemblFungi" id="CBF89739">
    <property type="protein sequence ID" value="CBF89739"/>
    <property type="gene ID" value="ANIA_00316"/>
</dbReference>
<dbReference type="KEGG" id="ani:ANIA_00316"/>
<dbReference type="VEuPathDB" id="FungiDB:AN0316"/>
<dbReference type="eggNOG" id="KOG1376">
    <property type="taxonomic scope" value="Eukaryota"/>
</dbReference>
<dbReference type="HOGENOM" id="CLU_015718_0_0_1"/>
<dbReference type="InParanoid" id="P24633"/>
<dbReference type="OMA" id="YMASCIL"/>
<dbReference type="OrthoDB" id="1662883at2759"/>
<dbReference type="Proteomes" id="UP000000560">
    <property type="component" value="Chromosome VIII"/>
</dbReference>
<dbReference type="GO" id="GO:0005737">
    <property type="term" value="C:cytoplasm"/>
    <property type="evidence" value="ECO:0000318"/>
    <property type="project" value="GO_Central"/>
</dbReference>
<dbReference type="GO" id="GO:0005881">
    <property type="term" value="C:cytoplasmic microtubule"/>
    <property type="evidence" value="ECO:0000314"/>
    <property type="project" value="AspGD"/>
</dbReference>
<dbReference type="GO" id="GO:0005874">
    <property type="term" value="C:microtubule"/>
    <property type="evidence" value="ECO:0000318"/>
    <property type="project" value="GO_Central"/>
</dbReference>
<dbReference type="GO" id="GO:0005634">
    <property type="term" value="C:nucleus"/>
    <property type="evidence" value="ECO:0000318"/>
    <property type="project" value="GO_Central"/>
</dbReference>
<dbReference type="GO" id="GO:0005819">
    <property type="term" value="C:spindle"/>
    <property type="evidence" value="ECO:0000318"/>
    <property type="project" value="GO_Central"/>
</dbReference>
<dbReference type="GO" id="GO:0045298">
    <property type="term" value="C:tubulin complex"/>
    <property type="evidence" value="ECO:0000316"/>
    <property type="project" value="AspGD"/>
</dbReference>
<dbReference type="GO" id="GO:0005525">
    <property type="term" value="F:GTP binding"/>
    <property type="evidence" value="ECO:0000318"/>
    <property type="project" value="GO_Central"/>
</dbReference>
<dbReference type="GO" id="GO:0016787">
    <property type="term" value="F:hydrolase activity"/>
    <property type="evidence" value="ECO:0007669"/>
    <property type="project" value="UniProtKB-KW"/>
</dbReference>
<dbReference type="GO" id="GO:0046872">
    <property type="term" value="F:metal ion binding"/>
    <property type="evidence" value="ECO:0007669"/>
    <property type="project" value="UniProtKB-KW"/>
</dbReference>
<dbReference type="GO" id="GO:0005200">
    <property type="term" value="F:structural constituent of cytoskeleton"/>
    <property type="evidence" value="ECO:0000315"/>
    <property type="project" value="AspGD"/>
</dbReference>
<dbReference type="GO" id="GO:0000226">
    <property type="term" value="P:microtubule cytoskeleton organization"/>
    <property type="evidence" value="ECO:0000318"/>
    <property type="project" value="GO_Central"/>
</dbReference>
<dbReference type="GO" id="GO:0046785">
    <property type="term" value="P:microtubule polymerization"/>
    <property type="evidence" value="ECO:0000315"/>
    <property type="project" value="AspGD"/>
</dbReference>
<dbReference type="GO" id="GO:0000278">
    <property type="term" value="P:mitotic cell cycle"/>
    <property type="evidence" value="ECO:0000318"/>
    <property type="project" value="GO_Central"/>
</dbReference>
<dbReference type="GO" id="GO:0000280">
    <property type="term" value="P:nuclear division"/>
    <property type="evidence" value="ECO:0000315"/>
    <property type="project" value="AspGD"/>
</dbReference>
<dbReference type="GO" id="GO:0098863">
    <property type="term" value="P:nuclear migration by microtubule mediated pushing forces"/>
    <property type="evidence" value="ECO:0000318"/>
    <property type="project" value="GO_Central"/>
</dbReference>
<dbReference type="CDD" id="cd02186">
    <property type="entry name" value="alpha_tubulin"/>
    <property type="match status" value="1"/>
</dbReference>
<dbReference type="FunFam" id="1.10.287.600:FF:000005">
    <property type="entry name" value="Tubulin alpha chain"/>
    <property type="match status" value="1"/>
</dbReference>
<dbReference type="FunFam" id="3.30.1330.20:FF:000001">
    <property type="entry name" value="Tubulin alpha chain"/>
    <property type="match status" value="1"/>
</dbReference>
<dbReference type="FunFam" id="3.40.50.1440:FF:000008">
    <property type="entry name" value="Tubulin alpha chain"/>
    <property type="match status" value="1"/>
</dbReference>
<dbReference type="Gene3D" id="1.10.287.600">
    <property type="entry name" value="Helix hairpin bin"/>
    <property type="match status" value="1"/>
</dbReference>
<dbReference type="Gene3D" id="3.30.1330.20">
    <property type="entry name" value="Tubulin/FtsZ, C-terminal domain"/>
    <property type="match status" value="1"/>
</dbReference>
<dbReference type="Gene3D" id="3.40.50.1440">
    <property type="entry name" value="Tubulin/FtsZ, GTPase domain"/>
    <property type="match status" value="1"/>
</dbReference>
<dbReference type="InterPro" id="IPR002452">
    <property type="entry name" value="Alpha_tubulin"/>
</dbReference>
<dbReference type="InterPro" id="IPR008280">
    <property type="entry name" value="Tub_FtsZ_C"/>
</dbReference>
<dbReference type="InterPro" id="IPR000217">
    <property type="entry name" value="Tubulin"/>
</dbReference>
<dbReference type="InterPro" id="IPR037103">
    <property type="entry name" value="Tubulin/FtsZ-like_C"/>
</dbReference>
<dbReference type="InterPro" id="IPR018316">
    <property type="entry name" value="Tubulin/FtsZ_2-layer-sand-dom"/>
</dbReference>
<dbReference type="InterPro" id="IPR036525">
    <property type="entry name" value="Tubulin/FtsZ_GTPase_sf"/>
</dbReference>
<dbReference type="InterPro" id="IPR023123">
    <property type="entry name" value="Tubulin_C"/>
</dbReference>
<dbReference type="InterPro" id="IPR017975">
    <property type="entry name" value="Tubulin_CS"/>
</dbReference>
<dbReference type="InterPro" id="IPR003008">
    <property type="entry name" value="Tubulin_FtsZ_GTPase"/>
</dbReference>
<dbReference type="PANTHER" id="PTHR11588">
    <property type="entry name" value="TUBULIN"/>
    <property type="match status" value="1"/>
</dbReference>
<dbReference type="Pfam" id="PF00091">
    <property type="entry name" value="Tubulin"/>
    <property type="match status" value="1"/>
</dbReference>
<dbReference type="Pfam" id="PF03953">
    <property type="entry name" value="Tubulin_C"/>
    <property type="match status" value="1"/>
</dbReference>
<dbReference type="PRINTS" id="PR01162">
    <property type="entry name" value="ALPHATUBULIN"/>
</dbReference>
<dbReference type="PRINTS" id="PR01161">
    <property type="entry name" value="TUBULIN"/>
</dbReference>
<dbReference type="SMART" id="SM00864">
    <property type="entry name" value="Tubulin"/>
    <property type="match status" value="1"/>
</dbReference>
<dbReference type="SMART" id="SM00865">
    <property type="entry name" value="Tubulin_C"/>
    <property type="match status" value="1"/>
</dbReference>
<dbReference type="SUPFAM" id="SSF55307">
    <property type="entry name" value="Tubulin C-terminal domain-like"/>
    <property type="match status" value="1"/>
</dbReference>
<dbReference type="SUPFAM" id="SSF52490">
    <property type="entry name" value="Tubulin nucleotide-binding domain-like"/>
    <property type="match status" value="1"/>
</dbReference>
<dbReference type="PROSITE" id="PS00227">
    <property type="entry name" value="TUBULIN"/>
    <property type="match status" value="1"/>
</dbReference>
<evidence type="ECO:0000250" key="1"/>
<evidence type="ECO:0000250" key="2">
    <source>
        <dbReference type="UniProtKB" id="P68363"/>
    </source>
</evidence>
<evidence type="ECO:0000305" key="3"/>
<sequence>MREVISLNVGQAGCQIANSCWELYCLEHGIQPDGYLTEERKKEDPDHGFSTFFSETGQGKYVPRTIYADLEPNVVDEVRTGTYRSLFHPENLITGKEDASNNYARGHYTVGKEMIDQVLDKVRRMADSCSGLQGFLVFHSFGGGTGSGFGALLMERLSVDYGKKSKLEFCVYPAPQNATSVVEPYNSILTTHTTLEHSDCSFMVDNEAIYDICRRNLGIERPSYENLNRLIAQVVSSITASLRFDGSLNVDLNEFQTNLVPYPRIHFPLVAYSPVISADKASHEANSVQDITMSCFEPNNQMVKCDPRNGKYMATCLLYRGDVVPKETHAAVATLKTKRTIQFVDWCPTGFKIGICYQPPQQVPNGDLAKVNRAVCMLSNTTAISEAWSALDHKFDLMYSKRAFVHWYVGEGMEEGEFSEAREDLAALERDYEEVASDSLEEEGEEVEY</sequence>
<name>TBA1_EMENI</name>
<keyword id="KW-0963">Cytoplasm</keyword>
<keyword id="KW-0206">Cytoskeleton</keyword>
<keyword id="KW-0342">GTP-binding</keyword>
<keyword id="KW-0378">Hydrolase</keyword>
<keyword id="KW-0460">Magnesium</keyword>
<keyword id="KW-0479">Metal-binding</keyword>
<keyword id="KW-0493">Microtubule</keyword>
<keyword id="KW-0547">Nucleotide-binding</keyword>
<keyword id="KW-1185">Reference proteome</keyword>